<evidence type="ECO:0000250" key="1">
    <source>
        <dbReference type="UniProtKB" id="O95563"/>
    </source>
</evidence>
<evidence type="ECO:0000250" key="2">
    <source>
        <dbReference type="UniProtKB" id="Q9D023"/>
    </source>
</evidence>
<evidence type="ECO:0000255" key="3"/>
<evidence type="ECO:0000305" key="4"/>
<organism>
    <name type="scientific">Pongo abelii</name>
    <name type="common">Sumatran orangutan</name>
    <name type="synonym">Pongo pygmaeus abelii</name>
    <dbReference type="NCBI Taxonomy" id="9601"/>
    <lineage>
        <taxon>Eukaryota</taxon>
        <taxon>Metazoa</taxon>
        <taxon>Chordata</taxon>
        <taxon>Craniata</taxon>
        <taxon>Vertebrata</taxon>
        <taxon>Euteleostomi</taxon>
        <taxon>Mammalia</taxon>
        <taxon>Eutheria</taxon>
        <taxon>Euarchontoglires</taxon>
        <taxon>Primates</taxon>
        <taxon>Haplorrhini</taxon>
        <taxon>Catarrhini</taxon>
        <taxon>Hominidae</taxon>
        <taxon>Pongo</taxon>
    </lineage>
</organism>
<proteinExistence type="evidence at transcript level"/>
<comment type="function">
    <text evidence="1">Mediates the uptake of pyruvate into mitochondria.</text>
</comment>
<comment type="catalytic activity">
    <reaction evidence="1">
        <text>pyruvate(out) + H(+)(out) = pyruvate(in) + H(+)(in)</text>
        <dbReference type="Rhea" id="RHEA:64720"/>
        <dbReference type="ChEBI" id="CHEBI:15361"/>
        <dbReference type="ChEBI" id="CHEBI:15378"/>
    </reaction>
</comment>
<comment type="subunit">
    <text evidence="1">Homodimer. Homooligomer. Forms heterodimers with MPC1 and MPC1L. The heterodimer is the more stable and dominant form.</text>
</comment>
<comment type="subcellular location">
    <subcellularLocation>
        <location evidence="2">Mitochondrion inner membrane</location>
        <topology evidence="3">Multi-pass membrane protein</topology>
    </subcellularLocation>
</comment>
<comment type="similarity">
    <text evidence="4">Belongs to the mitochondrial pyruvate carrier (MPC) (TC 2.A.105) family.</text>
</comment>
<name>MPC2_PONAB</name>
<keyword id="KW-0472">Membrane</keyword>
<keyword id="KW-0496">Mitochondrion</keyword>
<keyword id="KW-0999">Mitochondrion inner membrane</keyword>
<keyword id="KW-1185">Reference proteome</keyword>
<keyword id="KW-0812">Transmembrane</keyword>
<keyword id="KW-1133">Transmembrane helix</keyword>
<keyword id="KW-0813">Transport</keyword>
<reference key="1">
    <citation type="submission" date="2004-11" db="EMBL/GenBank/DDBJ databases">
        <authorList>
            <consortium name="The German cDNA consortium"/>
        </authorList>
    </citation>
    <scope>NUCLEOTIDE SEQUENCE [LARGE SCALE MRNA]</scope>
    <source>
        <tissue>Brain cortex</tissue>
    </source>
</reference>
<protein>
    <recommendedName>
        <fullName>Mitochondrial pyruvate carrier 2</fullName>
    </recommendedName>
    <alternativeName>
        <fullName>Brain protein 44</fullName>
    </alternativeName>
</protein>
<feature type="chain" id="PRO_0000212795" description="Mitochondrial pyruvate carrier 2">
    <location>
        <begin position="1"/>
        <end position="127"/>
    </location>
</feature>
<feature type="topological domain" description="Mitochondrial matrix" evidence="1">
    <location>
        <begin position="2"/>
        <end position="40"/>
    </location>
</feature>
<feature type="transmembrane region" description="Helical" evidence="3">
    <location>
        <begin position="41"/>
        <end position="61"/>
    </location>
</feature>
<feature type="topological domain" description="Mitochondrial intermembrane" evidence="1">
    <location>
        <begin position="62"/>
        <end position="72"/>
    </location>
</feature>
<feature type="transmembrane region" description="Helical" evidence="3">
    <location>
        <begin position="73"/>
        <end position="90"/>
    </location>
</feature>
<feature type="topological domain" description="Mitochondrial matrix" evidence="1">
    <location>
        <begin position="91"/>
        <end position="95"/>
    </location>
</feature>
<feature type="transmembrane region" description="Helical" evidence="3">
    <location>
        <begin position="96"/>
        <end position="115"/>
    </location>
</feature>
<feature type="topological domain" description="Mitochondrial intermembrane" evidence="1">
    <location>
        <begin position="116"/>
        <end position="127"/>
    </location>
</feature>
<gene>
    <name type="primary">MPC2</name>
    <name type="synonym">BRP44</name>
</gene>
<accession>Q5R4Z3</accession>
<dbReference type="EMBL" id="CR861094">
    <property type="protein sequence ID" value="CAH93173.1"/>
    <property type="molecule type" value="mRNA"/>
</dbReference>
<dbReference type="RefSeq" id="NP_001126868.1">
    <property type="nucleotide sequence ID" value="NM_001133396.1"/>
</dbReference>
<dbReference type="SMR" id="Q5R4Z3"/>
<dbReference type="STRING" id="9601.ENSPPYP00000000639"/>
<dbReference type="GeneID" id="100173880"/>
<dbReference type="KEGG" id="pon:100173880"/>
<dbReference type="CTD" id="25874"/>
<dbReference type="eggNOG" id="KOG1589">
    <property type="taxonomic scope" value="Eukaryota"/>
</dbReference>
<dbReference type="InParanoid" id="Q5R4Z3"/>
<dbReference type="OrthoDB" id="869189at2759"/>
<dbReference type="Proteomes" id="UP000001595">
    <property type="component" value="Unplaced"/>
</dbReference>
<dbReference type="GO" id="GO:0005743">
    <property type="term" value="C:mitochondrial inner membrane"/>
    <property type="evidence" value="ECO:0000250"/>
    <property type="project" value="UniProtKB"/>
</dbReference>
<dbReference type="GO" id="GO:0006850">
    <property type="term" value="P:mitochondrial pyruvate transmembrane transport"/>
    <property type="evidence" value="ECO:0000250"/>
    <property type="project" value="UniProtKB"/>
</dbReference>
<dbReference type="InterPro" id="IPR005336">
    <property type="entry name" value="MPC"/>
</dbReference>
<dbReference type="PANTHER" id="PTHR14154">
    <property type="entry name" value="UPF0041 BRAIN PROTEIN 44-RELATED"/>
    <property type="match status" value="1"/>
</dbReference>
<dbReference type="Pfam" id="PF03650">
    <property type="entry name" value="MPC"/>
    <property type="match status" value="1"/>
</dbReference>
<sequence>MSAAGARGLRATYHRLLDKVELMLPEKLRPLYNHPAGPRTVFFWAPIMKRGLVCAGLADMARPAEKLSTAQSAVLMATGFIWSRYSLVIIPKNWSLFAVNFFVGAAGASQLFRIWRYNQELKAKAHK</sequence>